<sequence>MTQSNPNEQNVELNRTSLYWGLLLIFVLAVLFSNYFFN</sequence>
<dbReference type="EMBL" id="AY147588">
    <property type="protein sequence ID" value="AAN32454.1"/>
    <property type="molecule type" value="Genomic_DNA"/>
</dbReference>
<dbReference type="SMR" id="Q67HA0"/>
<dbReference type="GO" id="GO:0009535">
    <property type="term" value="C:chloroplast thylakoid membrane"/>
    <property type="evidence" value="ECO:0007669"/>
    <property type="project" value="UniProtKB-SubCell"/>
</dbReference>
<dbReference type="GO" id="GO:0009539">
    <property type="term" value="C:photosystem II reaction center"/>
    <property type="evidence" value="ECO:0007669"/>
    <property type="project" value="InterPro"/>
</dbReference>
<dbReference type="GO" id="GO:0015979">
    <property type="term" value="P:photosynthesis"/>
    <property type="evidence" value="ECO:0007669"/>
    <property type="project" value="UniProtKB-UniRule"/>
</dbReference>
<dbReference type="HAMAP" id="MF_01317">
    <property type="entry name" value="PSII_PsbL"/>
    <property type="match status" value="1"/>
</dbReference>
<dbReference type="InterPro" id="IPR003372">
    <property type="entry name" value="PSII_PsbL"/>
</dbReference>
<dbReference type="InterPro" id="IPR037266">
    <property type="entry name" value="PSII_PsbL_sf"/>
</dbReference>
<dbReference type="NCBIfam" id="NF001972">
    <property type="entry name" value="PRK00753.1"/>
    <property type="match status" value="1"/>
</dbReference>
<dbReference type="Pfam" id="PF02419">
    <property type="entry name" value="PsbL"/>
    <property type="match status" value="1"/>
</dbReference>
<dbReference type="SUPFAM" id="SSF161017">
    <property type="entry name" value="Photosystem II reaction center protein L, PsbL"/>
    <property type="match status" value="1"/>
</dbReference>
<evidence type="ECO:0000255" key="1">
    <source>
        <dbReference type="HAMAP-Rule" id="MF_01317"/>
    </source>
</evidence>
<proteinExistence type="inferred from homology"/>
<gene>
    <name evidence="1" type="primary">psbL</name>
</gene>
<reference key="1">
    <citation type="submission" date="2002-09" db="EMBL/GenBank/DDBJ databases">
        <title>Phylogenetic relationships among the major lineages of Asparagales based on a large chloroplast data set.</title>
        <authorList>
            <person name="McPherson M.A."/>
            <person name="Rai H.S."/>
            <person name="Wong W.A."/>
            <person name="Graham S.W."/>
        </authorList>
    </citation>
    <scope>NUCLEOTIDE SEQUENCE [GENOMIC DNA]</scope>
</reference>
<organism>
    <name type="scientific">Maianthemum racemosum</name>
    <name type="common">False Solomon's-seal</name>
    <name type="synonym">Smilacina racemosa</name>
    <dbReference type="NCBI Taxonomy" id="39530"/>
    <lineage>
        <taxon>Eukaryota</taxon>
        <taxon>Viridiplantae</taxon>
        <taxon>Streptophyta</taxon>
        <taxon>Embryophyta</taxon>
        <taxon>Tracheophyta</taxon>
        <taxon>Spermatophyta</taxon>
        <taxon>Magnoliopsida</taxon>
        <taxon>Liliopsida</taxon>
        <taxon>Asparagales</taxon>
        <taxon>Asparagaceae</taxon>
        <taxon>Nolinoideae</taxon>
        <taxon>Maianthemum</taxon>
    </lineage>
</organism>
<comment type="function">
    <text evidence="1">One of the components of the core complex of photosystem II (PSII). PSII is a light-driven water:plastoquinone oxidoreductase that uses light energy to abstract electrons from H(2)O, generating O(2) and a proton gradient subsequently used for ATP formation. It consists of a core antenna complex that captures photons, and an electron transfer chain that converts photonic excitation into a charge separation. This subunit is found at the monomer-monomer interface and is required for correct PSII assembly and/or dimerization.</text>
</comment>
<comment type="subunit">
    <text evidence="1">PSII is composed of 1 copy each of membrane proteins PsbA, PsbB, PsbC, PsbD, PsbE, PsbF, PsbH, PsbI, PsbJ, PsbK, PsbL, PsbM, PsbT, PsbX, PsbY, PsbZ, Psb30/Ycf12, at least 3 peripheral proteins of the oxygen-evolving complex and a large number of cofactors. It forms dimeric complexes.</text>
</comment>
<comment type="subcellular location">
    <subcellularLocation>
        <location evidence="1">Plastid</location>
        <location evidence="1">Chloroplast thylakoid membrane</location>
        <topology evidence="1">Single-pass membrane protein</topology>
    </subcellularLocation>
</comment>
<comment type="similarity">
    <text evidence="1">Belongs to the PsbL family.</text>
</comment>
<geneLocation type="chloroplast"/>
<accession>Q67HA0</accession>
<keyword id="KW-0150">Chloroplast</keyword>
<keyword id="KW-0472">Membrane</keyword>
<keyword id="KW-0602">Photosynthesis</keyword>
<keyword id="KW-0604">Photosystem II</keyword>
<keyword id="KW-0934">Plastid</keyword>
<keyword id="KW-0674">Reaction center</keyword>
<keyword id="KW-0793">Thylakoid</keyword>
<keyword id="KW-0812">Transmembrane</keyword>
<keyword id="KW-1133">Transmembrane helix</keyword>
<protein>
    <recommendedName>
        <fullName evidence="1">Photosystem II reaction center protein L</fullName>
        <shortName evidence="1">PSII-L</shortName>
    </recommendedName>
</protein>
<feature type="chain" id="PRO_0000219738" description="Photosystem II reaction center protein L">
    <location>
        <begin position="1"/>
        <end position="38"/>
    </location>
</feature>
<feature type="transmembrane region" description="Helical" evidence="1">
    <location>
        <begin position="17"/>
        <end position="37"/>
    </location>
</feature>
<name>PSBL_MAIRA</name>